<keyword id="KW-0051">Antiviral defense</keyword>
<keyword id="KW-0378">Hydrolase</keyword>
<keyword id="KW-0547">Nucleotide-binding</keyword>
<protein>
    <recommendedName>
        <fullName evidence="6">CD-NTase-associated protein 12</fullName>
        <shortName evidence="6">Cap12</shortName>
    </recommendedName>
    <alternativeName>
        <fullName evidence="1">NAD(+) hydrolase</fullName>
        <ecNumber evidence="1">3.2.2.5</ecNumber>
    </alternativeName>
    <alternativeName>
        <fullName evidence="5">TIR-STING</fullName>
        <shortName evidence="5">LbSTING</shortName>
    </alternativeName>
</protein>
<sequence>MKTRIFIGSSSEGIDVAKRIKTFFAPEYDCFLWTDDIFRNNESFLETLVKSASLFDFGFMVFSADDKTTIRDQHFESPRDNVLFEYGLFLGRVGLDRAFVIAETDAKIPTDMLGITQTRYETIVNSKGIKVATDSLESSLQKLKKQIDENVQLGHLGLLPSTVIAISYFEGFVKLAAEWLVENTPELMINNHKFNKASLKIVMPESLDTDIKRSAMMYYKRHGLEEARIDTKHRNYPIHFASKTEDGILEVYDMPTILTGIDKAIDMYFRVGHIGKTNEQKLAEDHEMNNFKRVLQLLINEDAFCRECVEIIEPQP</sequence>
<accession>P0DUE0</accession>
<dbReference type="EC" id="3.2.2.5" evidence="1"/>
<dbReference type="SMR" id="P0DUE0"/>
<dbReference type="GO" id="GO:0003953">
    <property type="term" value="F:NAD+ nucleosidase activity"/>
    <property type="evidence" value="ECO:0007669"/>
    <property type="project" value="UniProtKB-EC"/>
</dbReference>
<dbReference type="GO" id="GO:0050135">
    <property type="term" value="F:NADP+ nucleosidase activity"/>
    <property type="evidence" value="ECO:0007669"/>
    <property type="project" value="InterPro"/>
</dbReference>
<dbReference type="GO" id="GO:0000166">
    <property type="term" value="F:nucleotide binding"/>
    <property type="evidence" value="ECO:0007669"/>
    <property type="project" value="UniProtKB-KW"/>
</dbReference>
<dbReference type="GO" id="GO:0051607">
    <property type="term" value="P:defense response to virus"/>
    <property type="evidence" value="ECO:0007669"/>
    <property type="project" value="UniProtKB-KW"/>
</dbReference>
<dbReference type="CDD" id="cd22659">
    <property type="entry name" value="STING_bact-like"/>
    <property type="match status" value="1"/>
</dbReference>
<dbReference type="InterPro" id="IPR019302">
    <property type="entry name" value="CAP12/PCTIR_TIR_dom"/>
</dbReference>
<dbReference type="InterPro" id="IPR046876">
    <property type="entry name" value="Prok_STING"/>
</dbReference>
<dbReference type="Pfam" id="PF10137">
    <property type="entry name" value="CAP12-PCTIR_TIR"/>
    <property type="match status" value="1"/>
</dbReference>
<dbReference type="Pfam" id="PF20300">
    <property type="entry name" value="prok_STING"/>
    <property type="match status" value="1"/>
</dbReference>
<proteinExistence type="evidence at protein level"/>
<name>CAP12_LACSX</name>
<organism>
    <name type="scientific">Lachnospiraceae bacterium (strain RUG226)</name>
    <dbReference type="NCBI Taxonomy" id="2778090"/>
    <lineage>
        <taxon>Bacteria</taxon>
        <taxon>Bacillati</taxon>
        <taxon>Bacillota</taxon>
        <taxon>Clostridia</taxon>
        <taxon>Lachnospirales</taxon>
        <taxon>Lachnospiraceae</taxon>
    </lineage>
</organism>
<gene>
    <name evidence="6" type="primary">cap12</name>
    <name type="ORF">Ga0313508_15007</name>
    <name type="ORF">IMG 2800731183</name>
</gene>
<reference key="1">
    <citation type="journal article" date="2020" name="Nature">
        <title>STING cyclic dinucleotide sensing originated in bacteria.</title>
        <authorList>
            <person name="Morehouse B.R."/>
            <person name="Govande A.A."/>
            <person name="Millman A."/>
            <person name="Keszei A.F.A."/>
            <person name="Lowey B."/>
            <person name="Ofir G."/>
            <person name="Shao S."/>
            <person name="Sorek R."/>
            <person name="Kranzusch P.J."/>
        </authorList>
    </citation>
    <scope>C-DI-GMP-BINDING</scope>
    <scope>NUCLEOTIDE-BINDING</scope>
    <scope>DOMAIN</scope>
</reference>
<reference key="2">
    <citation type="journal article" date="2020" name="Nat. Microbiol.">
        <title>Diversity and classification of cyclic-oligonucleotide-based anti-phage signalling systems.</title>
        <authorList>
            <person name="Millman A."/>
            <person name="Melamed S."/>
            <person name="Amitai G."/>
            <person name="Sorek R."/>
        </authorList>
    </citation>
    <scope>CLASSIFICATION AND NOMENCLATURE</scope>
</reference>
<feature type="chain" id="PRO_0000451879" description="CD-NTase-associated protein 12">
    <location>
        <begin position="1"/>
        <end position="316"/>
    </location>
</feature>
<feature type="domain" description="TIR" evidence="2 7">
    <location>
        <begin position="4"/>
        <end position="121"/>
    </location>
</feature>
<feature type="region of interest" description="STING domain" evidence="1">
    <location>
        <begin position="161"/>
        <end position="316"/>
    </location>
</feature>
<feature type="binding site" evidence="1">
    <location>
        <position position="172"/>
    </location>
    <ligand>
        <name>3',3'-c-di-GMP</name>
        <dbReference type="ChEBI" id="CHEBI:58805"/>
    </ligand>
</feature>
<feature type="binding site" evidence="1">
    <location>
        <position position="237"/>
    </location>
    <ligand>
        <name>3',3'-c-di-GMP</name>
        <dbReference type="ChEBI" id="CHEBI:58805"/>
    </ligand>
</feature>
<feature type="binding site" evidence="1">
    <location>
        <position position="253"/>
    </location>
    <ligand>
        <name>3',3'-c-di-GMP</name>
        <dbReference type="ChEBI" id="CHEBI:58805"/>
    </ligand>
</feature>
<comment type="function">
    <text evidence="1 4 7">Effector protein of a CBASS antiviral system with NAD(+) hydrolase activity (By similarity). CBASS (cyclic oligonucleotide-based antiphage signaling system) provides immunity against bacteriophage. The CD-NTase protein synthesizes cyclic nucleotides in response to infection; these serve as specific second messenger signals. The signals activate a diverse range of effectors, leading to bacterial cell death and thus abortive phage infection. A type I-D(GG) CBASS system (PubMed:32839535).</text>
</comment>
<comment type="function">
    <text evidence="1 3">Binds c-di-GMP (synthesized by the cognate CdnE encoded upstream in the same operon) but not c-di-AMP, 2'-3'-cGAMP, 3'-3'-cGAMP or cUMP-AMP (tested without the N-terminal TIR domain) (PubMed:32877915). Upon activation by c-di-GMP forms filaments which hydrolyze NAD(+); filament formation is required for enzyme activation (By similarity).</text>
</comment>
<comment type="catalytic activity">
    <reaction evidence="1">
        <text>NAD(+) + H2O = ADP-D-ribose + nicotinamide + H(+)</text>
        <dbReference type="Rhea" id="RHEA:16301"/>
        <dbReference type="ChEBI" id="CHEBI:15377"/>
        <dbReference type="ChEBI" id="CHEBI:15378"/>
        <dbReference type="ChEBI" id="CHEBI:17154"/>
        <dbReference type="ChEBI" id="CHEBI:57540"/>
        <dbReference type="ChEBI" id="CHEBI:57967"/>
        <dbReference type="EC" id="3.2.2.5"/>
    </reaction>
</comment>
<comment type="activity regulation">
    <text evidence="1 7">NAD(+) hydrolase activity is strongly stimulated by c-di-GMP, weakly by 3'3'-cGAMP, very weakly by c-di-AMP but not at all by 2'3'-cGAMP (Probable). Self-association of TIR domains is required for NADase activity (By similarity).</text>
</comment>
<comment type="subunit">
    <text evidence="1">Forms homodimers; in the presence of c-di-GMP forms filaments with an ordered array of parallel-stacked subunits.</text>
</comment>
<comment type="domain">
    <text evidence="1 7">The N-terminal TIR domain mediates NAD(+) hydrolase (NADase) activity. The cyclic nucleotide binds in the C-terminal bacterial STING region (PubMed:32877915). Upon binding to c-di-GMP the STING region closes around the ligand, which is bound by residues from 2 adjacent subunits. STING-STING interactions are the main drivers of filamentation; rearrangements in the STING domain allow reorganization of packing of the TIR domains, forming the NADase active site; cross-filament contacts strengthen the assembly (By similarity).</text>
</comment>
<comment type="similarity">
    <text evidence="6">In the C-terminal section; belongs to the bacterial STING family.</text>
</comment>
<comment type="online information" name="IMG gene page for 2800731183">
    <link uri="https://img.jgi.doe.gov/cgi-bin/m/main.cgi?section=GeneDetail&amp;page=genePageMainFaa&amp;gene_oid=2800731183"/>
</comment>
<evidence type="ECO:0000250" key="1">
    <source>
        <dbReference type="UniProtKB" id="A0A2T5Y4G4"/>
    </source>
</evidence>
<evidence type="ECO:0000255" key="2">
    <source>
        <dbReference type="PROSITE-ProRule" id="PRU00204"/>
    </source>
</evidence>
<evidence type="ECO:0000269" key="3">
    <source>
    </source>
</evidence>
<evidence type="ECO:0000303" key="4">
    <source>
    </source>
</evidence>
<evidence type="ECO:0000303" key="5">
    <source>
    </source>
</evidence>
<evidence type="ECO:0000305" key="6"/>
<evidence type="ECO:0000305" key="7">
    <source>
    </source>
</evidence>